<accession>Q9D6I3</accession>
<accession>Q6JEK6</accession>
<keyword id="KW-0963">Cytoplasm</keyword>
<keyword id="KW-0217">Developmental protein</keyword>
<keyword id="KW-0221">Differentiation</keyword>
<keyword id="KW-0446">Lipid-binding</keyword>
<keyword id="KW-1185">Reference proteome</keyword>
<keyword id="KW-0744">Spermatogenesis</keyword>
<comment type="function">
    <text evidence="2 4">Involved in male fertility (PubMed:35950913). Required for manchette development and acrosome biogenesis during spermiogenesis (PubMed:35950913). Binds in vitro to phospholipids, including phosphatidylinositol 3-phosphate (PtdIns(3)P), phosphatidylinositol 4,5-bisphosphate (PtdIns(4,5)P2), phosphatidylinositol 4-phosphate (PtdIns(4)P) and phosphatidic acid (PA). Contrary to other profilin family members, does not bind to actin in vitro (By similarity).</text>
</comment>
<comment type="subcellular location">
    <subcellularLocation>
        <location evidence="1">Cytoplasm</location>
    </subcellularLocation>
    <text evidence="1">In round spermatids, mainly observed in the acroplaxome. During the progression of spermiogenesis, relocalizes to the developing manchette of spermatids step 8 (S8). Coinciding with the initiation of manchette disassembly in spermatids S14, seen in the cytoplasm subjacent to the disassembling manchette.</text>
</comment>
<comment type="tissue specificity">
    <text evidence="3">Expressed in testis, in germ cells in seminiferous tubules (at protein level).</text>
</comment>
<comment type="disruption phenotype">
    <text evidence="4">Homozygous knockout males are infertile, whereas females have normal fertility. Sperm from knockout mice display severe impairment in manchette formation, amorphous sperm head shape and flagellar defects, resulting in reduced sperm motility. Sperm of homozygous knockout males displays a significantly reduced acrosome reaction and decreased viability.</text>
</comment>
<comment type="similarity">
    <text evidence="5">Belongs to the profilin family.</text>
</comment>
<proteinExistence type="evidence at protein level"/>
<evidence type="ECO:0000250" key="1">
    <source>
        <dbReference type="UniProtKB" id="Q5IRJ7"/>
    </source>
</evidence>
<evidence type="ECO:0000250" key="2">
    <source>
        <dbReference type="UniProtKB" id="Q8NHR9"/>
    </source>
</evidence>
<evidence type="ECO:0000269" key="3">
    <source>
    </source>
</evidence>
<evidence type="ECO:0000269" key="4">
    <source>
    </source>
</evidence>
<evidence type="ECO:0000305" key="5"/>
<feature type="chain" id="PRO_0000199582" description="Profilin-4">
    <location>
        <begin position="1"/>
        <end position="129"/>
    </location>
</feature>
<protein>
    <recommendedName>
        <fullName>Profilin-4</fullName>
    </recommendedName>
    <alternativeName>
        <fullName>Profilin IV</fullName>
    </alternativeName>
</protein>
<dbReference type="EMBL" id="AK013595">
    <property type="protein sequence ID" value="BAB28919.1"/>
    <property type="molecule type" value="mRNA"/>
</dbReference>
<dbReference type="EMBL" id="AY495949">
    <property type="protein sequence ID" value="AAS75143.1"/>
    <property type="molecule type" value="mRNA"/>
</dbReference>
<dbReference type="EMBL" id="BC116888">
    <property type="protein sequence ID" value="AAI16889.1"/>
    <property type="molecule type" value="mRNA"/>
</dbReference>
<dbReference type="EMBL" id="BC116890">
    <property type="protein sequence ID" value="AAI16891.1"/>
    <property type="molecule type" value="mRNA"/>
</dbReference>
<dbReference type="CCDS" id="CCDS25790.1"/>
<dbReference type="RefSeq" id="NP_001348076.1">
    <property type="nucleotide sequence ID" value="NM_001361147.1"/>
</dbReference>
<dbReference type="RefSeq" id="NP_082652.1">
    <property type="nucleotide sequence ID" value="NM_028376.4"/>
</dbReference>
<dbReference type="RefSeq" id="XP_006515201.1">
    <property type="nucleotide sequence ID" value="XM_006515138.3"/>
</dbReference>
<dbReference type="RefSeq" id="XP_006515202.1">
    <property type="nucleotide sequence ID" value="XM_006515139.2"/>
</dbReference>
<dbReference type="RefSeq" id="XP_006515203.1">
    <property type="nucleotide sequence ID" value="XM_006515140.4"/>
</dbReference>
<dbReference type="SMR" id="Q9D6I3"/>
<dbReference type="FunCoup" id="Q9D6I3">
    <property type="interactions" value="319"/>
</dbReference>
<dbReference type="STRING" id="10090.ENSMUSP00000136765"/>
<dbReference type="iPTMnet" id="Q9D6I3"/>
<dbReference type="PhosphoSitePlus" id="Q9D6I3"/>
<dbReference type="PaxDb" id="10090-ENSMUSP00000020967"/>
<dbReference type="ProteomicsDB" id="291599"/>
<dbReference type="Antibodypedia" id="27446">
    <property type="antibodies" value="47 antibodies from 15 providers"/>
</dbReference>
<dbReference type="DNASU" id="382562"/>
<dbReference type="Ensembl" id="ENSMUST00000020967.11">
    <property type="protein sequence ID" value="ENSMUSP00000020967.5"/>
    <property type="gene ID" value="ENSMUSG00000020639.15"/>
</dbReference>
<dbReference type="Ensembl" id="ENSMUST00000178879.3">
    <property type="protein sequence ID" value="ENSMUSP00000136765.2"/>
    <property type="gene ID" value="ENSMUSG00000020639.15"/>
</dbReference>
<dbReference type="GeneID" id="382562"/>
<dbReference type="KEGG" id="mmu:382562"/>
<dbReference type="UCSC" id="uc007myf.1">
    <property type="organism name" value="mouse"/>
</dbReference>
<dbReference type="AGR" id="MGI:1920121"/>
<dbReference type="CTD" id="375189"/>
<dbReference type="MGI" id="MGI:1920121">
    <property type="gene designation" value="Pfn4"/>
</dbReference>
<dbReference type="VEuPathDB" id="HostDB:ENSMUSG00000020639"/>
<dbReference type="eggNOG" id="KOG1755">
    <property type="taxonomic scope" value="Eukaryota"/>
</dbReference>
<dbReference type="GeneTree" id="ENSGT00390000017067"/>
<dbReference type="HOGENOM" id="CLU_120772_2_0_1"/>
<dbReference type="InParanoid" id="Q9D6I3"/>
<dbReference type="OMA" id="QGQKFML"/>
<dbReference type="OrthoDB" id="421374at2759"/>
<dbReference type="PhylomeDB" id="Q9D6I3"/>
<dbReference type="TreeFam" id="TF101075"/>
<dbReference type="BioGRID-ORCS" id="382562">
    <property type="hits" value="1 hit in 78 CRISPR screens"/>
</dbReference>
<dbReference type="PRO" id="PR:Q9D6I3"/>
<dbReference type="Proteomes" id="UP000000589">
    <property type="component" value="Chromosome 12"/>
</dbReference>
<dbReference type="RNAct" id="Q9D6I3">
    <property type="molecule type" value="protein"/>
</dbReference>
<dbReference type="Bgee" id="ENSMUSG00000020639">
    <property type="expression patterns" value="Expressed in spermatid and 87 other cell types or tissues"/>
</dbReference>
<dbReference type="ExpressionAtlas" id="Q9D6I3">
    <property type="expression patterns" value="baseline and differential"/>
</dbReference>
<dbReference type="GO" id="GO:0005737">
    <property type="term" value="C:cytoplasm"/>
    <property type="evidence" value="ECO:0007669"/>
    <property type="project" value="UniProtKB-SubCell"/>
</dbReference>
<dbReference type="GO" id="GO:0003779">
    <property type="term" value="F:actin binding"/>
    <property type="evidence" value="ECO:0007669"/>
    <property type="project" value="InterPro"/>
</dbReference>
<dbReference type="GO" id="GO:0008289">
    <property type="term" value="F:lipid binding"/>
    <property type="evidence" value="ECO:0007669"/>
    <property type="project" value="UniProtKB-KW"/>
</dbReference>
<dbReference type="GO" id="GO:0001675">
    <property type="term" value="P:acrosome assembly"/>
    <property type="evidence" value="ECO:0000315"/>
    <property type="project" value="UniProtKB"/>
</dbReference>
<dbReference type="GO" id="GO:0030317">
    <property type="term" value="P:flagellated sperm motility"/>
    <property type="evidence" value="ECO:0000315"/>
    <property type="project" value="UniProtKB"/>
</dbReference>
<dbReference type="GO" id="GO:1905198">
    <property type="term" value="P:manchette assembly"/>
    <property type="evidence" value="ECO:0000315"/>
    <property type="project" value="UniProtKB"/>
</dbReference>
<dbReference type="GO" id="GO:0120316">
    <property type="term" value="P:sperm flagellum assembly"/>
    <property type="evidence" value="ECO:0000315"/>
    <property type="project" value="UniProtKB"/>
</dbReference>
<dbReference type="GO" id="GO:0007283">
    <property type="term" value="P:spermatogenesis"/>
    <property type="evidence" value="ECO:0000315"/>
    <property type="project" value="UniProtKB"/>
</dbReference>
<dbReference type="CDD" id="cd00148">
    <property type="entry name" value="PROF"/>
    <property type="match status" value="1"/>
</dbReference>
<dbReference type="FunFam" id="3.30.450.30:FF:000007">
    <property type="entry name" value="Profilin"/>
    <property type="match status" value="1"/>
</dbReference>
<dbReference type="Gene3D" id="3.30.450.30">
    <property type="entry name" value="Dynein light chain 2a, cytoplasmic"/>
    <property type="match status" value="1"/>
</dbReference>
<dbReference type="InterPro" id="IPR048278">
    <property type="entry name" value="PFN"/>
</dbReference>
<dbReference type="InterPro" id="IPR005455">
    <property type="entry name" value="PFN_euk"/>
</dbReference>
<dbReference type="InterPro" id="IPR036140">
    <property type="entry name" value="PFN_sf"/>
</dbReference>
<dbReference type="PANTHER" id="PTHR11604">
    <property type="entry name" value="PROFILIN"/>
    <property type="match status" value="1"/>
</dbReference>
<dbReference type="PANTHER" id="PTHR11604:SF2">
    <property type="entry name" value="PROFILIN-4"/>
    <property type="match status" value="1"/>
</dbReference>
<dbReference type="Pfam" id="PF00235">
    <property type="entry name" value="Profilin"/>
    <property type="match status" value="1"/>
</dbReference>
<dbReference type="SMART" id="SM00392">
    <property type="entry name" value="PROF"/>
    <property type="match status" value="1"/>
</dbReference>
<dbReference type="SUPFAM" id="SSF55770">
    <property type="entry name" value="Profilin (actin-binding protein)"/>
    <property type="match status" value="1"/>
</dbReference>
<organism>
    <name type="scientific">Mus musculus</name>
    <name type="common">Mouse</name>
    <dbReference type="NCBI Taxonomy" id="10090"/>
    <lineage>
        <taxon>Eukaryota</taxon>
        <taxon>Metazoa</taxon>
        <taxon>Chordata</taxon>
        <taxon>Craniata</taxon>
        <taxon>Vertebrata</taxon>
        <taxon>Euteleostomi</taxon>
        <taxon>Mammalia</taxon>
        <taxon>Eutheria</taxon>
        <taxon>Euarchontoglires</taxon>
        <taxon>Glires</taxon>
        <taxon>Rodentia</taxon>
        <taxon>Myomorpha</taxon>
        <taxon>Muroidea</taxon>
        <taxon>Muridae</taxon>
        <taxon>Murinae</taxon>
        <taxon>Mus</taxon>
        <taxon>Mus</taxon>
    </lineage>
</organism>
<gene>
    <name type="primary">Pfn4</name>
</gene>
<sequence>MSHLQNLLLDTLLGTKHVDSAALIKLQEKTLCVTSPGFSVMPSDVRTLLNGFAKNPLLTRREGLYFKEKDYKCVRADDYSLYAKNENTGVVVVKTNMYLVVATYTAGMYPSVCVEATEKLGEYLRKKGN</sequence>
<name>PROF4_MOUSE</name>
<reference key="1">
    <citation type="journal article" date="2005" name="Science">
        <title>The transcriptional landscape of the mammalian genome.</title>
        <authorList>
            <person name="Carninci P."/>
            <person name="Kasukawa T."/>
            <person name="Katayama S."/>
            <person name="Gough J."/>
            <person name="Frith M.C."/>
            <person name="Maeda N."/>
            <person name="Oyama R."/>
            <person name="Ravasi T."/>
            <person name="Lenhard B."/>
            <person name="Wells C."/>
            <person name="Kodzius R."/>
            <person name="Shimokawa K."/>
            <person name="Bajic V.B."/>
            <person name="Brenner S.E."/>
            <person name="Batalov S."/>
            <person name="Forrest A.R."/>
            <person name="Zavolan M."/>
            <person name="Davis M.J."/>
            <person name="Wilming L.G."/>
            <person name="Aidinis V."/>
            <person name="Allen J.E."/>
            <person name="Ambesi-Impiombato A."/>
            <person name="Apweiler R."/>
            <person name="Aturaliya R.N."/>
            <person name="Bailey T.L."/>
            <person name="Bansal M."/>
            <person name="Baxter L."/>
            <person name="Beisel K.W."/>
            <person name="Bersano T."/>
            <person name="Bono H."/>
            <person name="Chalk A.M."/>
            <person name="Chiu K.P."/>
            <person name="Choudhary V."/>
            <person name="Christoffels A."/>
            <person name="Clutterbuck D.R."/>
            <person name="Crowe M.L."/>
            <person name="Dalla E."/>
            <person name="Dalrymple B.P."/>
            <person name="de Bono B."/>
            <person name="Della Gatta G."/>
            <person name="di Bernardo D."/>
            <person name="Down T."/>
            <person name="Engstrom P."/>
            <person name="Fagiolini M."/>
            <person name="Faulkner G."/>
            <person name="Fletcher C.F."/>
            <person name="Fukushima T."/>
            <person name="Furuno M."/>
            <person name="Futaki S."/>
            <person name="Gariboldi M."/>
            <person name="Georgii-Hemming P."/>
            <person name="Gingeras T.R."/>
            <person name="Gojobori T."/>
            <person name="Green R.E."/>
            <person name="Gustincich S."/>
            <person name="Harbers M."/>
            <person name="Hayashi Y."/>
            <person name="Hensch T.K."/>
            <person name="Hirokawa N."/>
            <person name="Hill D."/>
            <person name="Huminiecki L."/>
            <person name="Iacono M."/>
            <person name="Ikeo K."/>
            <person name="Iwama A."/>
            <person name="Ishikawa T."/>
            <person name="Jakt M."/>
            <person name="Kanapin A."/>
            <person name="Katoh M."/>
            <person name="Kawasawa Y."/>
            <person name="Kelso J."/>
            <person name="Kitamura H."/>
            <person name="Kitano H."/>
            <person name="Kollias G."/>
            <person name="Krishnan S.P."/>
            <person name="Kruger A."/>
            <person name="Kummerfeld S.K."/>
            <person name="Kurochkin I.V."/>
            <person name="Lareau L.F."/>
            <person name="Lazarevic D."/>
            <person name="Lipovich L."/>
            <person name="Liu J."/>
            <person name="Liuni S."/>
            <person name="McWilliam S."/>
            <person name="Madan Babu M."/>
            <person name="Madera M."/>
            <person name="Marchionni L."/>
            <person name="Matsuda H."/>
            <person name="Matsuzawa S."/>
            <person name="Miki H."/>
            <person name="Mignone F."/>
            <person name="Miyake S."/>
            <person name="Morris K."/>
            <person name="Mottagui-Tabar S."/>
            <person name="Mulder N."/>
            <person name="Nakano N."/>
            <person name="Nakauchi H."/>
            <person name="Ng P."/>
            <person name="Nilsson R."/>
            <person name="Nishiguchi S."/>
            <person name="Nishikawa S."/>
            <person name="Nori F."/>
            <person name="Ohara O."/>
            <person name="Okazaki Y."/>
            <person name="Orlando V."/>
            <person name="Pang K.C."/>
            <person name="Pavan W.J."/>
            <person name="Pavesi G."/>
            <person name="Pesole G."/>
            <person name="Petrovsky N."/>
            <person name="Piazza S."/>
            <person name="Reed J."/>
            <person name="Reid J.F."/>
            <person name="Ring B.Z."/>
            <person name="Ringwald M."/>
            <person name="Rost B."/>
            <person name="Ruan Y."/>
            <person name="Salzberg S.L."/>
            <person name="Sandelin A."/>
            <person name="Schneider C."/>
            <person name="Schoenbach C."/>
            <person name="Sekiguchi K."/>
            <person name="Semple C.A."/>
            <person name="Seno S."/>
            <person name="Sessa L."/>
            <person name="Sheng Y."/>
            <person name="Shibata Y."/>
            <person name="Shimada H."/>
            <person name="Shimada K."/>
            <person name="Silva D."/>
            <person name="Sinclair B."/>
            <person name="Sperling S."/>
            <person name="Stupka E."/>
            <person name="Sugiura K."/>
            <person name="Sultana R."/>
            <person name="Takenaka Y."/>
            <person name="Taki K."/>
            <person name="Tammoja K."/>
            <person name="Tan S.L."/>
            <person name="Tang S."/>
            <person name="Taylor M.S."/>
            <person name="Tegner J."/>
            <person name="Teichmann S.A."/>
            <person name="Ueda H.R."/>
            <person name="van Nimwegen E."/>
            <person name="Verardo R."/>
            <person name="Wei C.L."/>
            <person name="Yagi K."/>
            <person name="Yamanishi H."/>
            <person name="Zabarovsky E."/>
            <person name="Zhu S."/>
            <person name="Zimmer A."/>
            <person name="Hide W."/>
            <person name="Bult C."/>
            <person name="Grimmond S.M."/>
            <person name="Teasdale R.D."/>
            <person name="Liu E.T."/>
            <person name="Brusic V."/>
            <person name="Quackenbush J."/>
            <person name="Wahlestedt C."/>
            <person name="Mattick J.S."/>
            <person name="Hume D.A."/>
            <person name="Kai C."/>
            <person name="Sasaki D."/>
            <person name="Tomaru Y."/>
            <person name="Fukuda S."/>
            <person name="Kanamori-Katayama M."/>
            <person name="Suzuki M."/>
            <person name="Aoki J."/>
            <person name="Arakawa T."/>
            <person name="Iida J."/>
            <person name="Imamura K."/>
            <person name="Itoh M."/>
            <person name="Kato T."/>
            <person name="Kawaji H."/>
            <person name="Kawagashira N."/>
            <person name="Kawashima T."/>
            <person name="Kojima M."/>
            <person name="Kondo S."/>
            <person name="Konno H."/>
            <person name="Nakano K."/>
            <person name="Ninomiya N."/>
            <person name="Nishio T."/>
            <person name="Okada M."/>
            <person name="Plessy C."/>
            <person name="Shibata K."/>
            <person name="Shiraki T."/>
            <person name="Suzuki S."/>
            <person name="Tagami M."/>
            <person name="Waki K."/>
            <person name="Watahiki A."/>
            <person name="Okamura-Oho Y."/>
            <person name="Suzuki H."/>
            <person name="Kawai J."/>
            <person name="Hayashizaki Y."/>
        </authorList>
    </citation>
    <scope>NUCLEOTIDE SEQUENCE [LARGE SCALE MRNA]</scope>
    <source>
        <strain>C57BL/6J</strain>
        <tissue>Hippocampus</tissue>
    </source>
</reference>
<reference key="2">
    <citation type="submission" date="2003-12" db="EMBL/GenBank/DDBJ databases">
        <title>Profilin IV is a new testis-specific isoform of the profilin family.</title>
        <authorList>
            <person name="Braun A."/>
        </authorList>
    </citation>
    <scope>NUCLEOTIDE SEQUENCE [MRNA]</scope>
    <source>
        <strain>C57BL/6J</strain>
        <tissue>Testis</tissue>
    </source>
</reference>
<reference key="3">
    <citation type="journal article" date="2004" name="Genome Res.">
        <title>The status, quality, and expansion of the NIH full-length cDNA project: the Mammalian Gene Collection (MGC).</title>
        <authorList>
            <consortium name="The MGC Project Team"/>
        </authorList>
    </citation>
    <scope>NUCLEOTIDE SEQUENCE [LARGE SCALE MRNA]</scope>
    <source>
        <tissue>Brain</tissue>
    </source>
</reference>
<reference key="4">
    <citation type="journal article" date="2005" name="Mol. Hum. Reprod.">
        <title>Novel testis-expressed profilin IV associated with acrosome biogenesis and spermatid elongation.</title>
        <authorList>
            <person name="Obermann H."/>
            <person name="Raabe I."/>
            <person name="Balvers M."/>
            <person name="Brunswig B."/>
            <person name="Schulze W."/>
            <person name="Kirchhoff C."/>
        </authorList>
    </citation>
    <scope>TISSUE SPECIFICITY</scope>
</reference>
<reference key="5">
    <citation type="journal article" date="2022" name="Development">
        <title>PFN4 is required for manchette development and acrosome biogenesis during mouse spermiogenesis.</title>
        <authorList>
            <person name="Umer N."/>
            <person name="Phadke S."/>
            <person name="Shakeri F."/>
            <person name="Arevalo L."/>
            <person name="Lohanadan K."/>
            <person name="Kirfel G."/>
            <person name="Sylvester M."/>
            <person name="Buness A."/>
            <person name="Schorle H."/>
        </authorList>
    </citation>
    <scope>FUNCTION</scope>
    <scope>DISRUPTION PHENOTYPE</scope>
</reference>